<dbReference type="EMBL" id="AE017220">
    <property type="protein sequence ID" value="AAX67345.1"/>
    <property type="molecule type" value="Genomic_DNA"/>
</dbReference>
<dbReference type="RefSeq" id="WP_000157587.1">
    <property type="nucleotide sequence ID" value="NC_006905.1"/>
</dbReference>
<dbReference type="SMR" id="Q57IW7"/>
<dbReference type="KEGG" id="sec:SCH_3439"/>
<dbReference type="HOGENOM" id="CLU_189182_0_0_6"/>
<dbReference type="Proteomes" id="UP000000538">
    <property type="component" value="Chromosome"/>
</dbReference>
<dbReference type="GO" id="GO:0003677">
    <property type="term" value="F:DNA binding"/>
    <property type="evidence" value="ECO:0007669"/>
    <property type="project" value="UniProtKB-KW"/>
</dbReference>
<dbReference type="GO" id="GO:0005506">
    <property type="term" value="F:iron ion binding"/>
    <property type="evidence" value="ECO:0007669"/>
    <property type="project" value="UniProtKB-UniRule"/>
</dbReference>
<dbReference type="GO" id="GO:0051536">
    <property type="term" value="F:iron-sulfur cluster binding"/>
    <property type="evidence" value="ECO:0007669"/>
    <property type="project" value="UniProtKB-KW"/>
</dbReference>
<dbReference type="Gene3D" id="1.10.10.10">
    <property type="entry name" value="Winged helix-like DNA-binding domain superfamily/Winged helix DNA-binding domain"/>
    <property type="match status" value="1"/>
</dbReference>
<dbReference type="HAMAP" id="MF_01586">
    <property type="entry name" value="FeoC"/>
    <property type="match status" value="1"/>
</dbReference>
<dbReference type="InterPro" id="IPR023732">
    <property type="entry name" value="FeoC"/>
</dbReference>
<dbReference type="InterPro" id="IPR015102">
    <property type="entry name" value="Tscrpt_reg_HTH_FeoC"/>
</dbReference>
<dbReference type="InterPro" id="IPR036388">
    <property type="entry name" value="WH-like_DNA-bd_sf"/>
</dbReference>
<dbReference type="InterPro" id="IPR036390">
    <property type="entry name" value="WH_DNA-bd_sf"/>
</dbReference>
<dbReference type="NCBIfam" id="NF011960">
    <property type="entry name" value="PRK15431.1"/>
    <property type="match status" value="1"/>
</dbReference>
<dbReference type="Pfam" id="PF09012">
    <property type="entry name" value="FeoC"/>
    <property type="match status" value="1"/>
</dbReference>
<dbReference type="SUPFAM" id="SSF46785">
    <property type="entry name" value="Winged helix' DNA-binding domain"/>
    <property type="match status" value="1"/>
</dbReference>
<name>FEOC_SALCH</name>
<gene>
    <name evidence="1" type="primary">feoC</name>
    <name type="ordered locus">SCH_3439</name>
</gene>
<comment type="function">
    <text evidence="1">May function as a transcriptional regulator that controls feoABC expression.</text>
</comment>
<comment type="similarity">
    <text evidence="1">Belongs to the FeoC family.</text>
</comment>
<sequence length="78" mass="8648">MASLIQVRDLLALRGRMEATQISHTLHAPQPMIDAMLNQLEIMGKAVRIPEEADGCLSGSCKSCPEGKACLREWWALR</sequence>
<protein>
    <recommendedName>
        <fullName evidence="1">Probable [Fe-S]-dependent transcriptional repressor</fullName>
    </recommendedName>
</protein>
<feature type="chain" id="PRO_0000313063" description="Probable [Fe-S]-dependent transcriptional repressor">
    <location>
        <begin position="1"/>
        <end position="78"/>
    </location>
</feature>
<feature type="binding site" evidence="1">
    <location>
        <position position="56"/>
    </location>
    <ligand>
        <name>iron-sulfur cluster</name>
        <dbReference type="ChEBI" id="CHEBI:30408"/>
    </ligand>
</feature>
<feature type="binding site" evidence="1">
    <location>
        <position position="61"/>
    </location>
    <ligand>
        <name>iron-sulfur cluster</name>
        <dbReference type="ChEBI" id="CHEBI:30408"/>
    </ligand>
</feature>
<feature type="binding site" evidence="1">
    <location>
        <position position="64"/>
    </location>
    <ligand>
        <name>iron-sulfur cluster</name>
        <dbReference type="ChEBI" id="CHEBI:30408"/>
    </ligand>
</feature>
<feature type="binding site" evidence="1">
    <location>
        <position position="70"/>
    </location>
    <ligand>
        <name>iron-sulfur cluster</name>
        <dbReference type="ChEBI" id="CHEBI:30408"/>
    </ligand>
</feature>
<organism>
    <name type="scientific">Salmonella choleraesuis (strain SC-B67)</name>
    <dbReference type="NCBI Taxonomy" id="321314"/>
    <lineage>
        <taxon>Bacteria</taxon>
        <taxon>Pseudomonadati</taxon>
        <taxon>Pseudomonadota</taxon>
        <taxon>Gammaproteobacteria</taxon>
        <taxon>Enterobacterales</taxon>
        <taxon>Enterobacteriaceae</taxon>
        <taxon>Salmonella</taxon>
    </lineage>
</organism>
<accession>Q57IW7</accession>
<keyword id="KW-0238">DNA-binding</keyword>
<keyword id="KW-0408">Iron</keyword>
<keyword id="KW-0411">Iron-sulfur</keyword>
<keyword id="KW-0479">Metal-binding</keyword>
<keyword id="KW-0678">Repressor</keyword>
<keyword id="KW-0804">Transcription</keyword>
<keyword id="KW-0805">Transcription regulation</keyword>
<proteinExistence type="inferred from homology"/>
<evidence type="ECO:0000255" key="1">
    <source>
        <dbReference type="HAMAP-Rule" id="MF_01586"/>
    </source>
</evidence>
<reference key="1">
    <citation type="journal article" date="2005" name="Nucleic Acids Res.">
        <title>The genome sequence of Salmonella enterica serovar Choleraesuis, a highly invasive and resistant zoonotic pathogen.</title>
        <authorList>
            <person name="Chiu C.-H."/>
            <person name="Tang P."/>
            <person name="Chu C."/>
            <person name="Hu S."/>
            <person name="Bao Q."/>
            <person name="Yu J."/>
            <person name="Chou Y.-Y."/>
            <person name="Wang H.-S."/>
            <person name="Lee Y.-S."/>
        </authorList>
    </citation>
    <scope>NUCLEOTIDE SEQUENCE [LARGE SCALE GENOMIC DNA]</scope>
    <source>
        <strain>SC-B67</strain>
    </source>
</reference>